<evidence type="ECO:0000255" key="1">
    <source>
        <dbReference type="HAMAP-Rule" id="MF_01393"/>
    </source>
</evidence>
<keyword id="KW-0066">ATP synthesis</keyword>
<keyword id="KW-0997">Cell inner membrane</keyword>
<keyword id="KW-1003">Cell membrane</keyword>
<keyword id="KW-0138">CF(0)</keyword>
<keyword id="KW-0375">Hydrogen ion transport</keyword>
<keyword id="KW-0406">Ion transport</keyword>
<keyword id="KW-0472">Membrane</keyword>
<keyword id="KW-0812">Transmembrane</keyword>
<keyword id="KW-1133">Transmembrane helix</keyword>
<keyword id="KW-0813">Transport</keyword>
<dbReference type="EMBL" id="CP000744">
    <property type="protein sequence ID" value="ABR85827.1"/>
    <property type="molecule type" value="Genomic_DNA"/>
</dbReference>
<dbReference type="RefSeq" id="WP_003100237.1">
    <property type="nucleotide sequence ID" value="NC_009656.1"/>
</dbReference>
<dbReference type="SMR" id="A6VF38"/>
<dbReference type="GeneID" id="77224113"/>
<dbReference type="KEGG" id="pap:PSPA7_6362"/>
<dbReference type="HOGENOM" id="CLU_041018_1_0_6"/>
<dbReference type="Proteomes" id="UP000001582">
    <property type="component" value="Chromosome"/>
</dbReference>
<dbReference type="GO" id="GO:0005886">
    <property type="term" value="C:plasma membrane"/>
    <property type="evidence" value="ECO:0007669"/>
    <property type="project" value="UniProtKB-SubCell"/>
</dbReference>
<dbReference type="GO" id="GO:0045259">
    <property type="term" value="C:proton-transporting ATP synthase complex"/>
    <property type="evidence" value="ECO:0007669"/>
    <property type="project" value="UniProtKB-KW"/>
</dbReference>
<dbReference type="GO" id="GO:0046933">
    <property type="term" value="F:proton-transporting ATP synthase activity, rotational mechanism"/>
    <property type="evidence" value="ECO:0007669"/>
    <property type="project" value="UniProtKB-UniRule"/>
</dbReference>
<dbReference type="GO" id="GO:0042777">
    <property type="term" value="P:proton motive force-driven plasma membrane ATP synthesis"/>
    <property type="evidence" value="ECO:0007669"/>
    <property type="project" value="TreeGrafter"/>
</dbReference>
<dbReference type="CDD" id="cd00310">
    <property type="entry name" value="ATP-synt_Fo_a_6"/>
    <property type="match status" value="1"/>
</dbReference>
<dbReference type="FunFam" id="1.20.120.220:FF:000002">
    <property type="entry name" value="ATP synthase subunit a"/>
    <property type="match status" value="1"/>
</dbReference>
<dbReference type="Gene3D" id="1.20.120.220">
    <property type="entry name" value="ATP synthase, F0 complex, subunit A"/>
    <property type="match status" value="1"/>
</dbReference>
<dbReference type="HAMAP" id="MF_01393">
    <property type="entry name" value="ATP_synth_a_bact"/>
    <property type="match status" value="1"/>
</dbReference>
<dbReference type="InterPro" id="IPR045082">
    <property type="entry name" value="ATP_syn_F0_a_bact/chloroplast"/>
</dbReference>
<dbReference type="InterPro" id="IPR000568">
    <property type="entry name" value="ATP_synth_F0_asu"/>
</dbReference>
<dbReference type="InterPro" id="IPR023011">
    <property type="entry name" value="ATP_synth_F0_asu_AS"/>
</dbReference>
<dbReference type="InterPro" id="IPR035908">
    <property type="entry name" value="F0_ATP_A_sf"/>
</dbReference>
<dbReference type="NCBIfam" id="TIGR01131">
    <property type="entry name" value="ATP_synt_6_or_A"/>
    <property type="match status" value="1"/>
</dbReference>
<dbReference type="NCBIfam" id="NF004477">
    <property type="entry name" value="PRK05815.1-1"/>
    <property type="match status" value="1"/>
</dbReference>
<dbReference type="PANTHER" id="PTHR42823">
    <property type="entry name" value="ATP SYNTHASE SUBUNIT A, CHLOROPLASTIC"/>
    <property type="match status" value="1"/>
</dbReference>
<dbReference type="PANTHER" id="PTHR42823:SF3">
    <property type="entry name" value="ATP SYNTHASE SUBUNIT A, CHLOROPLASTIC"/>
    <property type="match status" value="1"/>
</dbReference>
<dbReference type="Pfam" id="PF00119">
    <property type="entry name" value="ATP-synt_A"/>
    <property type="match status" value="1"/>
</dbReference>
<dbReference type="SUPFAM" id="SSF81336">
    <property type="entry name" value="F1F0 ATP synthase subunit A"/>
    <property type="match status" value="1"/>
</dbReference>
<dbReference type="PROSITE" id="PS00449">
    <property type="entry name" value="ATPASE_A"/>
    <property type="match status" value="1"/>
</dbReference>
<feature type="chain" id="PRO_0000362391" description="ATP synthase subunit a">
    <location>
        <begin position="1"/>
        <end position="289"/>
    </location>
</feature>
<feature type="transmembrane region" description="Helical" evidence="1">
    <location>
        <begin position="43"/>
        <end position="63"/>
    </location>
</feature>
<feature type="transmembrane region" description="Helical" evidence="1">
    <location>
        <begin position="104"/>
        <end position="124"/>
    </location>
</feature>
<feature type="transmembrane region" description="Helical" evidence="1">
    <location>
        <begin position="160"/>
        <end position="180"/>
    </location>
</feature>
<feature type="transmembrane region" description="Helical" evidence="1">
    <location>
        <begin position="193"/>
        <end position="213"/>
    </location>
</feature>
<feature type="transmembrane region" description="Helical" evidence="1">
    <location>
        <begin position="232"/>
        <end position="252"/>
    </location>
</feature>
<feature type="transmembrane region" description="Helical" evidence="1">
    <location>
        <begin position="259"/>
        <end position="279"/>
    </location>
</feature>
<sequence length="289" mass="31921">MAAETASGYIQHHLQNLTFGRLPNGDWGFAHTAEQAKEMGFWAFHVDTLGWSVLLGVVFLFIFRLAAKKATSGQPGGLQNFVEVMVEFVDTSVKDTFHGRNPLIAPLALTVFVWIFLLNLIDLVPVDYLPMLAAKITGDEHLFFRAVATTDPNATLGLSISVFALIVFYSIKVKGIGGFLGELTLHPFSSKNIVVQILLIPVNFLLEFVTLIAKPVSLALRLFGNMYAGELIFILIAVMFGSGMFLLSALGVALNWAWAVFHILIITLQAFIFMMLTIVYLSMAHEDNH</sequence>
<protein>
    <recommendedName>
        <fullName evidence="1">ATP synthase subunit a</fullName>
    </recommendedName>
    <alternativeName>
        <fullName evidence="1">ATP synthase F0 sector subunit a</fullName>
    </alternativeName>
    <alternativeName>
        <fullName evidence="1">F-ATPase subunit 6</fullName>
    </alternativeName>
</protein>
<name>ATP6_PSEP7</name>
<reference key="1">
    <citation type="submission" date="2007-06" db="EMBL/GenBank/DDBJ databases">
        <authorList>
            <person name="Dodson R.J."/>
            <person name="Harkins D."/>
            <person name="Paulsen I.T."/>
        </authorList>
    </citation>
    <scope>NUCLEOTIDE SEQUENCE [LARGE SCALE GENOMIC DNA]</scope>
    <source>
        <strain>DSM 24068 / PA7</strain>
    </source>
</reference>
<organism>
    <name type="scientific">Pseudomonas paraeruginosa (strain DSM 24068 / PA7)</name>
    <name type="common">Pseudomonas aeruginosa (strain PA7)</name>
    <dbReference type="NCBI Taxonomy" id="381754"/>
    <lineage>
        <taxon>Bacteria</taxon>
        <taxon>Pseudomonadati</taxon>
        <taxon>Pseudomonadota</taxon>
        <taxon>Gammaproteobacteria</taxon>
        <taxon>Pseudomonadales</taxon>
        <taxon>Pseudomonadaceae</taxon>
        <taxon>Pseudomonas</taxon>
        <taxon>Pseudomonas paraeruginosa</taxon>
    </lineage>
</organism>
<gene>
    <name evidence="1" type="primary">atpB</name>
    <name type="ordered locus">PSPA7_6362</name>
</gene>
<comment type="function">
    <text evidence="1">Key component of the proton channel; it plays a direct role in the translocation of protons across the membrane.</text>
</comment>
<comment type="subunit">
    <text evidence="1">F-type ATPases have 2 components, CF(1) - the catalytic core - and CF(0) - the membrane proton channel. CF(1) has five subunits: alpha(3), beta(3), gamma(1), delta(1), epsilon(1). CF(0) has three main subunits: a(1), b(2) and c(9-12). The alpha and beta chains form an alternating ring which encloses part of the gamma chain. CF(1) is attached to CF(0) by a central stalk formed by the gamma and epsilon chains, while a peripheral stalk is formed by the delta and b chains.</text>
</comment>
<comment type="subcellular location">
    <subcellularLocation>
        <location evidence="1">Cell inner membrane</location>
        <topology evidence="1">Multi-pass membrane protein</topology>
    </subcellularLocation>
</comment>
<comment type="similarity">
    <text evidence="1">Belongs to the ATPase A chain family.</text>
</comment>
<proteinExistence type="inferred from homology"/>
<accession>A6VF38</accession>